<name>DNLJ_SYNFM</name>
<protein>
    <recommendedName>
        <fullName evidence="1">DNA ligase</fullName>
        <ecNumber evidence="1">6.5.1.2</ecNumber>
    </recommendedName>
    <alternativeName>
        <fullName evidence="1">Polydeoxyribonucleotide synthase [NAD(+)]</fullName>
    </alternativeName>
</protein>
<reference key="1">
    <citation type="submission" date="2006-10" db="EMBL/GenBank/DDBJ databases">
        <title>Complete sequence of Syntrophobacter fumaroxidans MPOB.</title>
        <authorList>
            <consortium name="US DOE Joint Genome Institute"/>
            <person name="Copeland A."/>
            <person name="Lucas S."/>
            <person name="Lapidus A."/>
            <person name="Barry K."/>
            <person name="Detter J.C."/>
            <person name="Glavina del Rio T."/>
            <person name="Hammon N."/>
            <person name="Israni S."/>
            <person name="Pitluck S."/>
            <person name="Goltsman E.G."/>
            <person name="Martinez M."/>
            <person name="Schmutz J."/>
            <person name="Larimer F."/>
            <person name="Land M."/>
            <person name="Hauser L."/>
            <person name="Kyrpides N."/>
            <person name="Kim E."/>
            <person name="Boone D.R."/>
            <person name="Brockman F."/>
            <person name="Culley D."/>
            <person name="Ferry J."/>
            <person name="Gunsalus R."/>
            <person name="McInerney M.J."/>
            <person name="Morrison M."/>
            <person name="Plugge C."/>
            <person name="Rohlin L."/>
            <person name="Scholten J."/>
            <person name="Sieber J."/>
            <person name="Stams A.J.M."/>
            <person name="Worm P."/>
            <person name="Henstra A.M."/>
            <person name="Richardson P."/>
        </authorList>
    </citation>
    <scope>NUCLEOTIDE SEQUENCE [LARGE SCALE GENOMIC DNA]</scope>
    <source>
        <strain>DSM 10017 / MPOB</strain>
    </source>
</reference>
<evidence type="ECO:0000255" key="1">
    <source>
        <dbReference type="HAMAP-Rule" id="MF_01588"/>
    </source>
</evidence>
<evidence type="ECO:0000305" key="2"/>
<comment type="function">
    <text evidence="1">DNA ligase that catalyzes the formation of phosphodiester linkages between 5'-phosphoryl and 3'-hydroxyl groups in double-stranded DNA using NAD as a coenzyme and as the energy source for the reaction. It is essential for DNA replication and repair of damaged DNA.</text>
</comment>
<comment type="catalytic activity">
    <reaction evidence="1">
        <text>NAD(+) + (deoxyribonucleotide)n-3'-hydroxyl + 5'-phospho-(deoxyribonucleotide)m = (deoxyribonucleotide)n+m + AMP + beta-nicotinamide D-nucleotide.</text>
        <dbReference type="EC" id="6.5.1.2"/>
    </reaction>
</comment>
<comment type="cofactor">
    <cofactor evidence="1">
        <name>Mg(2+)</name>
        <dbReference type="ChEBI" id="CHEBI:18420"/>
    </cofactor>
    <cofactor evidence="1">
        <name>Mn(2+)</name>
        <dbReference type="ChEBI" id="CHEBI:29035"/>
    </cofactor>
</comment>
<comment type="similarity">
    <text evidence="1">Belongs to the NAD-dependent DNA ligase family. LigA subfamily.</text>
</comment>
<comment type="sequence caution" evidence="2">
    <conflict type="erroneous initiation">
        <sequence resource="EMBL-CDS" id="ABK17119"/>
    </conflict>
</comment>
<feature type="chain" id="PRO_0000313488" description="DNA ligase">
    <location>
        <begin position="1"/>
        <end position="675"/>
    </location>
</feature>
<feature type="domain" description="BRCT" evidence="1">
    <location>
        <begin position="597"/>
        <end position="675"/>
    </location>
</feature>
<feature type="active site" description="N6-AMP-lysine intermediate" evidence="1">
    <location>
        <position position="118"/>
    </location>
</feature>
<feature type="binding site" evidence="1">
    <location>
        <begin position="35"/>
        <end position="39"/>
    </location>
    <ligand>
        <name>NAD(+)</name>
        <dbReference type="ChEBI" id="CHEBI:57540"/>
    </ligand>
</feature>
<feature type="binding site" evidence="1">
    <location>
        <begin position="84"/>
        <end position="85"/>
    </location>
    <ligand>
        <name>NAD(+)</name>
        <dbReference type="ChEBI" id="CHEBI:57540"/>
    </ligand>
</feature>
<feature type="binding site" evidence="1">
    <location>
        <position position="116"/>
    </location>
    <ligand>
        <name>NAD(+)</name>
        <dbReference type="ChEBI" id="CHEBI:57540"/>
    </ligand>
</feature>
<feature type="binding site" evidence="1">
    <location>
        <position position="139"/>
    </location>
    <ligand>
        <name>NAD(+)</name>
        <dbReference type="ChEBI" id="CHEBI:57540"/>
    </ligand>
</feature>
<feature type="binding site" evidence="1">
    <location>
        <position position="180"/>
    </location>
    <ligand>
        <name>NAD(+)</name>
        <dbReference type="ChEBI" id="CHEBI:57540"/>
    </ligand>
</feature>
<feature type="binding site" evidence="1">
    <location>
        <position position="296"/>
    </location>
    <ligand>
        <name>NAD(+)</name>
        <dbReference type="ChEBI" id="CHEBI:57540"/>
    </ligand>
</feature>
<feature type="binding site" evidence="1">
    <location>
        <position position="320"/>
    </location>
    <ligand>
        <name>NAD(+)</name>
        <dbReference type="ChEBI" id="CHEBI:57540"/>
    </ligand>
</feature>
<feature type="binding site" evidence="1">
    <location>
        <position position="414"/>
    </location>
    <ligand>
        <name>Zn(2+)</name>
        <dbReference type="ChEBI" id="CHEBI:29105"/>
    </ligand>
</feature>
<feature type="binding site" evidence="1">
    <location>
        <position position="417"/>
    </location>
    <ligand>
        <name>Zn(2+)</name>
        <dbReference type="ChEBI" id="CHEBI:29105"/>
    </ligand>
</feature>
<feature type="binding site" evidence="1">
    <location>
        <position position="432"/>
    </location>
    <ligand>
        <name>Zn(2+)</name>
        <dbReference type="ChEBI" id="CHEBI:29105"/>
    </ligand>
</feature>
<feature type="binding site" evidence="1">
    <location>
        <position position="437"/>
    </location>
    <ligand>
        <name>Zn(2+)</name>
        <dbReference type="ChEBI" id="CHEBI:29105"/>
    </ligand>
</feature>
<gene>
    <name evidence="1" type="primary">ligA</name>
    <name type="ordered locus">Sfum_1428</name>
</gene>
<accession>A0LI67</accession>
<dbReference type="EC" id="6.5.1.2" evidence="1"/>
<dbReference type="EMBL" id="CP000478">
    <property type="protein sequence ID" value="ABK17119.1"/>
    <property type="status" value="ALT_INIT"/>
    <property type="molecule type" value="Genomic_DNA"/>
</dbReference>
<dbReference type="RefSeq" id="WP_041440114.1">
    <property type="nucleotide sequence ID" value="NC_008554.1"/>
</dbReference>
<dbReference type="SMR" id="A0LI67"/>
<dbReference type="FunCoup" id="A0LI67">
    <property type="interactions" value="436"/>
</dbReference>
<dbReference type="STRING" id="335543.Sfum_1428"/>
<dbReference type="KEGG" id="sfu:Sfum_1428"/>
<dbReference type="eggNOG" id="COG0272">
    <property type="taxonomic scope" value="Bacteria"/>
</dbReference>
<dbReference type="HOGENOM" id="CLU_007764_2_1_7"/>
<dbReference type="InParanoid" id="A0LI67"/>
<dbReference type="OrthoDB" id="9759736at2"/>
<dbReference type="Proteomes" id="UP000001784">
    <property type="component" value="Chromosome"/>
</dbReference>
<dbReference type="GO" id="GO:0005829">
    <property type="term" value="C:cytosol"/>
    <property type="evidence" value="ECO:0007669"/>
    <property type="project" value="TreeGrafter"/>
</dbReference>
<dbReference type="GO" id="GO:0003677">
    <property type="term" value="F:DNA binding"/>
    <property type="evidence" value="ECO:0007669"/>
    <property type="project" value="InterPro"/>
</dbReference>
<dbReference type="GO" id="GO:0003911">
    <property type="term" value="F:DNA ligase (NAD+) activity"/>
    <property type="evidence" value="ECO:0007669"/>
    <property type="project" value="UniProtKB-UniRule"/>
</dbReference>
<dbReference type="GO" id="GO:0046872">
    <property type="term" value="F:metal ion binding"/>
    <property type="evidence" value="ECO:0007669"/>
    <property type="project" value="UniProtKB-KW"/>
</dbReference>
<dbReference type="GO" id="GO:0006281">
    <property type="term" value="P:DNA repair"/>
    <property type="evidence" value="ECO:0007669"/>
    <property type="project" value="UniProtKB-KW"/>
</dbReference>
<dbReference type="GO" id="GO:0006260">
    <property type="term" value="P:DNA replication"/>
    <property type="evidence" value="ECO:0007669"/>
    <property type="project" value="UniProtKB-KW"/>
</dbReference>
<dbReference type="CDD" id="cd17748">
    <property type="entry name" value="BRCT_DNA_ligase_like"/>
    <property type="match status" value="1"/>
</dbReference>
<dbReference type="CDD" id="cd00114">
    <property type="entry name" value="LIGANc"/>
    <property type="match status" value="1"/>
</dbReference>
<dbReference type="FunFam" id="1.10.150.20:FF:000006">
    <property type="entry name" value="DNA ligase"/>
    <property type="match status" value="1"/>
</dbReference>
<dbReference type="FunFam" id="1.10.150.20:FF:000007">
    <property type="entry name" value="DNA ligase"/>
    <property type="match status" value="1"/>
</dbReference>
<dbReference type="FunFam" id="1.10.287.610:FF:000002">
    <property type="entry name" value="DNA ligase"/>
    <property type="match status" value="1"/>
</dbReference>
<dbReference type="FunFam" id="2.40.50.140:FF:000012">
    <property type="entry name" value="DNA ligase"/>
    <property type="match status" value="1"/>
</dbReference>
<dbReference type="FunFam" id="3.30.470.30:FF:000001">
    <property type="entry name" value="DNA ligase"/>
    <property type="match status" value="1"/>
</dbReference>
<dbReference type="Gene3D" id="6.20.10.30">
    <property type="match status" value="1"/>
</dbReference>
<dbReference type="Gene3D" id="1.10.150.20">
    <property type="entry name" value="5' to 3' exonuclease, C-terminal subdomain"/>
    <property type="match status" value="2"/>
</dbReference>
<dbReference type="Gene3D" id="3.40.50.10190">
    <property type="entry name" value="BRCT domain"/>
    <property type="match status" value="1"/>
</dbReference>
<dbReference type="Gene3D" id="3.30.470.30">
    <property type="entry name" value="DNA ligase/mRNA capping enzyme"/>
    <property type="match status" value="1"/>
</dbReference>
<dbReference type="Gene3D" id="1.10.287.610">
    <property type="entry name" value="Helix hairpin bin"/>
    <property type="match status" value="1"/>
</dbReference>
<dbReference type="Gene3D" id="2.40.50.140">
    <property type="entry name" value="Nucleic acid-binding proteins"/>
    <property type="match status" value="1"/>
</dbReference>
<dbReference type="HAMAP" id="MF_01588">
    <property type="entry name" value="DNA_ligase_A"/>
    <property type="match status" value="1"/>
</dbReference>
<dbReference type="InterPro" id="IPR001357">
    <property type="entry name" value="BRCT_dom"/>
</dbReference>
<dbReference type="InterPro" id="IPR036420">
    <property type="entry name" value="BRCT_dom_sf"/>
</dbReference>
<dbReference type="InterPro" id="IPR041663">
    <property type="entry name" value="DisA/LigA_HHH"/>
</dbReference>
<dbReference type="InterPro" id="IPR001679">
    <property type="entry name" value="DNA_ligase"/>
</dbReference>
<dbReference type="InterPro" id="IPR018239">
    <property type="entry name" value="DNA_ligase_AS"/>
</dbReference>
<dbReference type="InterPro" id="IPR033136">
    <property type="entry name" value="DNA_ligase_CS"/>
</dbReference>
<dbReference type="InterPro" id="IPR013839">
    <property type="entry name" value="DNAligase_adenylation"/>
</dbReference>
<dbReference type="InterPro" id="IPR013840">
    <property type="entry name" value="DNAligase_N"/>
</dbReference>
<dbReference type="InterPro" id="IPR003583">
    <property type="entry name" value="Hlx-hairpin-Hlx_DNA-bd_motif"/>
</dbReference>
<dbReference type="InterPro" id="IPR012340">
    <property type="entry name" value="NA-bd_OB-fold"/>
</dbReference>
<dbReference type="InterPro" id="IPR004150">
    <property type="entry name" value="NAD_DNA_ligase_OB"/>
</dbReference>
<dbReference type="InterPro" id="IPR010994">
    <property type="entry name" value="RuvA_2-like"/>
</dbReference>
<dbReference type="InterPro" id="IPR004149">
    <property type="entry name" value="Znf_DNAligase_C4"/>
</dbReference>
<dbReference type="NCBIfam" id="TIGR00575">
    <property type="entry name" value="dnlj"/>
    <property type="match status" value="1"/>
</dbReference>
<dbReference type="NCBIfam" id="NF005932">
    <property type="entry name" value="PRK07956.1"/>
    <property type="match status" value="1"/>
</dbReference>
<dbReference type="PANTHER" id="PTHR23389">
    <property type="entry name" value="CHROMOSOME TRANSMISSION FIDELITY FACTOR 18"/>
    <property type="match status" value="1"/>
</dbReference>
<dbReference type="PANTHER" id="PTHR23389:SF9">
    <property type="entry name" value="DNA LIGASE"/>
    <property type="match status" value="1"/>
</dbReference>
<dbReference type="Pfam" id="PF00533">
    <property type="entry name" value="BRCT"/>
    <property type="match status" value="1"/>
</dbReference>
<dbReference type="Pfam" id="PF01653">
    <property type="entry name" value="DNA_ligase_aden"/>
    <property type="match status" value="1"/>
</dbReference>
<dbReference type="Pfam" id="PF03120">
    <property type="entry name" value="DNA_ligase_OB"/>
    <property type="match status" value="1"/>
</dbReference>
<dbReference type="Pfam" id="PF03119">
    <property type="entry name" value="DNA_ligase_ZBD"/>
    <property type="match status" value="1"/>
</dbReference>
<dbReference type="Pfam" id="PF12826">
    <property type="entry name" value="HHH_2"/>
    <property type="match status" value="1"/>
</dbReference>
<dbReference type="Pfam" id="PF14520">
    <property type="entry name" value="HHH_5"/>
    <property type="match status" value="1"/>
</dbReference>
<dbReference type="Pfam" id="PF22745">
    <property type="entry name" value="Nlig-Ia"/>
    <property type="match status" value="1"/>
</dbReference>
<dbReference type="PIRSF" id="PIRSF001604">
    <property type="entry name" value="LigA"/>
    <property type="match status" value="1"/>
</dbReference>
<dbReference type="SMART" id="SM00292">
    <property type="entry name" value="BRCT"/>
    <property type="match status" value="1"/>
</dbReference>
<dbReference type="SMART" id="SM00278">
    <property type="entry name" value="HhH1"/>
    <property type="match status" value="3"/>
</dbReference>
<dbReference type="SMART" id="SM00532">
    <property type="entry name" value="LIGANc"/>
    <property type="match status" value="1"/>
</dbReference>
<dbReference type="SUPFAM" id="SSF52113">
    <property type="entry name" value="BRCT domain"/>
    <property type="match status" value="1"/>
</dbReference>
<dbReference type="SUPFAM" id="SSF56091">
    <property type="entry name" value="DNA ligase/mRNA capping enzyme, catalytic domain"/>
    <property type="match status" value="1"/>
</dbReference>
<dbReference type="SUPFAM" id="SSF50249">
    <property type="entry name" value="Nucleic acid-binding proteins"/>
    <property type="match status" value="1"/>
</dbReference>
<dbReference type="SUPFAM" id="SSF47781">
    <property type="entry name" value="RuvA domain 2-like"/>
    <property type="match status" value="1"/>
</dbReference>
<dbReference type="PROSITE" id="PS50172">
    <property type="entry name" value="BRCT"/>
    <property type="match status" value="1"/>
</dbReference>
<dbReference type="PROSITE" id="PS01055">
    <property type="entry name" value="DNA_LIGASE_N1"/>
    <property type="match status" value="1"/>
</dbReference>
<dbReference type="PROSITE" id="PS01056">
    <property type="entry name" value="DNA_LIGASE_N2"/>
    <property type="match status" value="1"/>
</dbReference>
<proteinExistence type="inferred from homology"/>
<sequence>MPDREKAHARIEALREEIRHHNYLYYVLDRPEISDEAYDGLFRELVRLEESYPALITPDSPTQRVGAAPAEKFLPFPHTIPMLSLENAMSEAEVFEFARRVRKILGDRGDVDFMAEPKMDGLAVELVYENGELTGAGTRGDGYVGEDVTRNAKTIRAIPLKLYAGAGGASPPARIAVRGEVYMDRKDFAALNRSREQAGEPLFANPRNAAAGSLRQLDPSVTAARSLKAFFYGVGEVSGYRFKTQAQTLEQLRRWGLPVNPLSRVCPSIEDAVSFYNEIAAGRDALPFEIDGVVVKVNSIEWQEMLGEKSRSPRWAIAYKFSPHQARTRVLDIKVQVGRTGVLTPVAELEPVTVGGVTVRRATLHNQDEVERKDIRVRDQVMVRRAGDVIPEVVEVIGEARTGGEEVFQMPGQCPSCGSEVVRLPEEAVHRCLNRNCPAQIKASLRHFASRDAMNIEGLGKNIVSMLVDRGIVESVSDLYRLSVETLEQLPGFAGKSSRNLVESIERSKKTNLADFLYALGIYHVGSHVARLLAERFGTLDAVRRASVEELMSVNGVGEVVARSVVHYFSLPANRTLVESLLSAGLEMAATEPEAGPVDAFWNGKTVVFTGALSSMTRSNAAALTASRGARVSDSVSRKTDIVVAGADPGSKVEKARQLGITILDEREFLERLGM</sequence>
<organism>
    <name type="scientific">Syntrophobacter fumaroxidans (strain DSM 10017 / MPOB)</name>
    <dbReference type="NCBI Taxonomy" id="335543"/>
    <lineage>
        <taxon>Bacteria</taxon>
        <taxon>Pseudomonadati</taxon>
        <taxon>Thermodesulfobacteriota</taxon>
        <taxon>Syntrophobacteria</taxon>
        <taxon>Syntrophobacterales</taxon>
        <taxon>Syntrophobacteraceae</taxon>
        <taxon>Syntrophobacter</taxon>
    </lineage>
</organism>
<keyword id="KW-0227">DNA damage</keyword>
<keyword id="KW-0234">DNA repair</keyword>
<keyword id="KW-0235">DNA replication</keyword>
<keyword id="KW-0436">Ligase</keyword>
<keyword id="KW-0460">Magnesium</keyword>
<keyword id="KW-0464">Manganese</keyword>
<keyword id="KW-0479">Metal-binding</keyword>
<keyword id="KW-0520">NAD</keyword>
<keyword id="KW-1185">Reference proteome</keyword>
<keyword id="KW-0862">Zinc</keyword>